<accession>Q3INQ4</accession>
<gene>
    <name evidence="1" type="primary">eif2b</name>
    <name type="ordered locus">NP_4314A</name>
</gene>
<comment type="function">
    <text evidence="1">eIF-2 functions in the early steps of protein synthesis by forming a ternary complex with GTP and initiator tRNA.</text>
</comment>
<comment type="subunit">
    <text evidence="1">Heterotrimer composed of an alpha, a beta and a gamma chain.</text>
</comment>
<comment type="similarity">
    <text evidence="1">Belongs to the eIF-2-beta/eIF-5 family.</text>
</comment>
<dbReference type="EMBL" id="CR936257">
    <property type="protein sequence ID" value="CAI50248.1"/>
    <property type="molecule type" value="Genomic_DNA"/>
</dbReference>
<dbReference type="RefSeq" id="WP_011323864.1">
    <property type="nucleotide sequence ID" value="NC_007426.1"/>
</dbReference>
<dbReference type="SMR" id="Q3INQ4"/>
<dbReference type="STRING" id="348780.NP_4314A"/>
<dbReference type="EnsemblBacteria" id="CAI50248">
    <property type="protein sequence ID" value="CAI50248"/>
    <property type="gene ID" value="NP_4314A"/>
</dbReference>
<dbReference type="GeneID" id="3703266"/>
<dbReference type="KEGG" id="nph:NP_4314A"/>
<dbReference type="eggNOG" id="arCOG01640">
    <property type="taxonomic scope" value="Archaea"/>
</dbReference>
<dbReference type="HOGENOM" id="CLU_026663_3_1_2"/>
<dbReference type="OrthoDB" id="38099at2157"/>
<dbReference type="Proteomes" id="UP000002698">
    <property type="component" value="Chromosome"/>
</dbReference>
<dbReference type="GO" id="GO:0003743">
    <property type="term" value="F:translation initiation factor activity"/>
    <property type="evidence" value="ECO:0007669"/>
    <property type="project" value="UniProtKB-UniRule"/>
</dbReference>
<dbReference type="Gene3D" id="3.30.30.170">
    <property type="match status" value="1"/>
</dbReference>
<dbReference type="HAMAP" id="MF_00232">
    <property type="entry name" value="eIF_2_beta"/>
    <property type="match status" value="1"/>
</dbReference>
<dbReference type="InterPro" id="IPR045196">
    <property type="entry name" value="IF2/IF5"/>
</dbReference>
<dbReference type="InterPro" id="IPR004458">
    <property type="entry name" value="TIF2_bsu_arc"/>
</dbReference>
<dbReference type="InterPro" id="IPR002735">
    <property type="entry name" value="Transl_init_fac_IF2/IF5_dom"/>
</dbReference>
<dbReference type="InterPro" id="IPR016189">
    <property type="entry name" value="Transl_init_fac_IF2/IF5_N"/>
</dbReference>
<dbReference type="InterPro" id="IPR016190">
    <property type="entry name" value="Transl_init_fac_IF2/IF5_Zn-bd"/>
</dbReference>
<dbReference type="NCBIfam" id="NF003067">
    <property type="entry name" value="PRK03988.1"/>
    <property type="match status" value="1"/>
</dbReference>
<dbReference type="PANTHER" id="PTHR23001">
    <property type="entry name" value="EUKARYOTIC TRANSLATION INITIATION FACTOR"/>
    <property type="match status" value="1"/>
</dbReference>
<dbReference type="PANTHER" id="PTHR23001:SF3">
    <property type="entry name" value="EUKARYOTIC TRANSLATION INITIATION FACTOR 2 SUBUNIT 2"/>
    <property type="match status" value="1"/>
</dbReference>
<dbReference type="Pfam" id="PF01873">
    <property type="entry name" value="eIF-5_eIF-2B"/>
    <property type="match status" value="1"/>
</dbReference>
<dbReference type="SMART" id="SM00653">
    <property type="entry name" value="eIF2B_5"/>
    <property type="match status" value="1"/>
</dbReference>
<dbReference type="SUPFAM" id="SSF100966">
    <property type="entry name" value="Translation initiation factor 2 beta, aIF2beta, N-terminal domain"/>
    <property type="match status" value="1"/>
</dbReference>
<dbReference type="SUPFAM" id="SSF75689">
    <property type="entry name" value="Zinc-binding domain of translation initiation factor 2 beta"/>
    <property type="match status" value="1"/>
</dbReference>
<protein>
    <recommendedName>
        <fullName evidence="1">Translation initiation factor 2 subunit beta</fullName>
    </recommendedName>
    <alternativeName>
        <fullName evidence="1">aIF2-beta</fullName>
    </alternativeName>
    <alternativeName>
        <fullName evidence="1">eIF-2-beta</fullName>
    </alternativeName>
</protein>
<name>IF2B_NATPD</name>
<sequence>MGYEEQLDRALEETPDIEGTAARFSVPDPDVRQEGNATVYENFQPTIDRLDREESHVMKFLQNELGTSANIDERGRLRLTGEFRQARVEEAINDYVEGYVICPECGLPDTRLEKENGAEVLRCEACGARSPAGN</sequence>
<proteinExistence type="inferred from homology"/>
<keyword id="KW-0396">Initiation factor</keyword>
<keyword id="KW-0648">Protein biosynthesis</keyword>
<keyword id="KW-1185">Reference proteome</keyword>
<evidence type="ECO:0000255" key="1">
    <source>
        <dbReference type="HAMAP-Rule" id="MF_00232"/>
    </source>
</evidence>
<evidence type="ECO:0000256" key="2">
    <source>
        <dbReference type="SAM" id="MobiDB-lite"/>
    </source>
</evidence>
<reference key="1">
    <citation type="journal article" date="2005" name="Genome Res.">
        <title>Living with two extremes: conclusions from the genome sequence of Natronomonas pharaonis.</title>
        <authorList>
            <person name="Falb M."/>
            <person name="Pfeiffer F."/>
            <person name="Palm P."/>
            <person name="Rodewald K."/>
            <person name="Hickmann V."/>
            <person name="Tittor J."/>
            <person name="Oesterhelt D."/>
        </authorList>
    </citation>
    <scope>NUCLEOTIDE SEQUENCE [LARGE SCALE GENOMIC DNA]</scope>
    <source>
        <strain>ATCC 35678 / DSM 2160 / CIP 103997 / JCM 8858 / NBRC 14720 / NCIMB 2260 / Gabara</strain>
    </source>
</reference>
<feature type="chain" id="PRO_1000021656" description="Translation initiation factor 2 subunit beta">
    <location>
        <begin position="1"/>
        <end position="134"/>
    </location>
</feature>
<feature type="region of interest" description="Disordered" evidence="2">
    <location>
        <begin position="1"/>
        <end position="32"/>
    </location>
</feature>
<feature type="compositionally biased region" description="Basic and acidic residues" evidence="2">
    <location>
        <begin position="1"/>
        <end position="12"/>
    </location>
</feature>
<organism>
    <name type="scientific">Natronomonas pharaonis (strain ATCC 35678 / DSM 2160 / CIP 103997 / JCM 8858 / NBRC 14720 / NCIMB 2260 / Gabara)</name>
    <name type="common">Halobacterium pharaonis</name>
    <dbReference type="NCBI Taxonomy" id="348780"/>
    <lineage>
        <taxon>Archaea</taxon>
        <taxon>Methanobacteriati</taxon>
        <taxon>Methanobacteriota</taxon>
        <taxon>Stenosarchaea group</taxon>
        <taxon>Halobacteria</taxon>
        <taxon>Halobacteriales</taxon>
        <taxon>Haloarculaceae</taxon>
        <taxon>Natronomonas</taxon>
    </lineage>
</organism>